<evidence type="ECO:0000255" key="1">
    <source>
        <dbReference type="HAMAP-Rule" id="MF_00167"/>
    </source>
</evidence>
<feature type="chain" id="PRO_0000177059" description="Translational regulator CsrA">
    <location>
        <begin position="1"/>
        <end position="78"/>
    </location>
</feature>
<keyword id="KW-1005">Bacterial flagellum biogenesis</keyword>
<keyword id="KW-0963">Cytoplasm</keyword>
<keyword id="KW-1185">Reference proteome</keyword>
<keyword id="KW-0678">Repressor</keyword>
<keyword id="KW-0694">RNA-binding</keyword>
<keyword id="KW-0810">Translation regulation</keyword>
<name>CSRA_DESPS</name>
<proteinExistence type="inferred from homology"/>
<gene>
    <name evidence="1" type="primary">csrA</name>
    <name type="ordered locus">DP2691</name>
</gene>
<dbReference type="EMBL" id="CR522870">
    <property type="protein sequence ID" value="CAG37420.1"/>
    <property type="molecule type" value="Genomic_DNA"/>
</dbReference>
<dbReference type="RefSeq" id="WP_011189932.1">
    <property type="nucleotide sequence ID" value="NC_006138.1"/>
</dbReference>
<dbReference type="SMR" id="Q6AJR0"/>
<dbReference type="STRING" id="177439.DP2691"/>
<dbReference type="KEGG" id="dps:DP2691"/>
<dbReference type="eggNOG" id="COG1551">
    <property type="taxonomic scope" value="Bacteria"/>
</dbReference>
<dbReference type="HOGENOM" id="CLU_164837_0_2_7"/>
<dbReference type="OrthoDB" id="9809061at2"/>
<dbReference type="Proteomes" id="UP000000602">
    <property type="component" value="Chromosome"/>
</dbReference>
<dbReference type="GO" id="GO:0005829">
    <property type="term" value="C:cytosol"/>
    <property type="evidence" value="ECO:0007669"/>
    <property type="project" value="TreeGrafter"/>
</dbReference>
<dbReference type="GO" id="GO:0048027">
    <property type="term" value="F:mRNA 5'-UTR binding"/>
    <property type="evidence" value="ECO:0007669"/>
    <property type="project" value="UniProtKB-UniRule"/>
</dbReference>
<dbReference type="GO" id="GO:0044781">
    <property type="term" value="P:bacterial-type flagellum organization"/>
    <property type="evidence" value="ECO:0007669"/>
    <property type="project" value="UniProtKB-KW"/>
</dbReference>
<dbReference type="GO" id="GO:0006402">
    <property type="term" value="P:mRNA catabolic process"/>
    <property type="evidence" value="ECO:0007669"/>
    <property type="project" value="InterPro"/>
</dbReference>
<dbReference type="GO" id="GO:0045947">
    <property type="term" value="P:negative regulation of translational initiation"/>
    <property type="evidence" value="ECO:0007669"/>
    <property type="project" value="UniProtKB-UniRule"/>
</dbReference>
<dbReference type="GO" id="GO:1902208">
    <property type="term" value="P:regulation of bacterial-type flagellum assembly"/>
    <property type="evidence" value="ECO:0007669"/>
    <property type="project" value="UniProtKB-UniRule"/>
</dbReference>
<dbReference type="GO" id="GO:0006109">
    <property type="term" value="P:regulation of carbohydrate metabolic process"/>
    <property type="evidence" value="ECO:0007669"/>
    <property type="project" value="InterPro"/>
</dbReference>
<dbReference type="FunFam" id="2.60.40.4380:FF:000002">
    <property type="entry name" value="Translational regulator CsrA"/>
    <property type="match status" value="1"/>
</dbReference>
<dbReference type="Gene3D" id="2.60.40.4380">
    <property type="entry name" value="Translational regulator CsrA"/>
    <property type="match status" value="1"/>
</dbReference>
<dbReference type="HAMAP" id="MF_00167">
    <property type="entry name" value="CsrA"/>
    <property type="match status" value="1"/>
</dbReference>
<dbReference type="InterPro" id="IPR003751">
    <property type="entry name" value="CsrA"/>
</dbReference>
<dbReference type="InterPro" id="IPR036107">
    <property type="entry name" value="CsrA_sf"/>
</dbReference>
<dbReference type="NCBIfam" id="TIGR00202">
    <property type="entry name" value="csrA"/>
    <property type="match status" value="1"/>
</dbReference>
<dbReference type="NCBIfam" id="NF002469">
    <property type="entry name" value="PRK01712.1"/>
    <property type="match status" value="1"/>
</dbReference>
<dbReference type="PANTHER" id="PTHR34984">
    <property type="entry name" value="CARBON STORAGE REGULATOR"/>
    <property type="match status" value="1"/>
</dbReference>
<dbReference type="PANTHER" id="PTHR34984:SF1">
    <property type="entry name" value="CARBON STORAGE REGULATOR"/>
    <property type="match status" value="1"/>
</dbReference>
<dbReference type="Pfam" id="PF02599">
    <property type="entry name" value="CsrA"/>
    <property type="match status" value="1"/>
</dbReference>
<dbReference type="SUPFAM" id="SSF117130">
    <property type="entry name" value="CsrA-like"/>
    <property type="match status" value="1"/>
</dbReference>
<sequence length="78" mass="8675">MLVLSRKLGEGIVIGDDIVLKIVEIKGGTIRIGIDAPLDKKIYRQEVYQRIIAENQEASQWSIDDLDAISSLISPQPK</sequence>
<reference key="1">
    <citation type="journal article" date="2004" name="Environ. Microbiol.">
        <title>The genome of Desulfotalea psychrophila, a sulfate-reducing bacterium from permanently cold Arctic sediments.</title>
        <authorList>
            <person name="Rabus R."/>
            <person name="Ruepp A."/>
            <person name="Frickey T."/>
            <person name="Rattei T."/>
            <person name="Fartmann B."/>
            <person name="Stark M."/>
            <person name="Bauer M."/>
            <person name="Zibat A."/>
            <person name="Lombardot T."/>
            <person name="Becker I."/>
            <person name="Amann J."/>
            <person name="Gellner K."/>
            <person name="Teeling H."/>
            <person name="Leuschner W.D."/>
            <person name="Gloeckner F.-O."/>
            <person name="Lupas A.N."/>
            <person name="Amann R."/>
            <person name="Klenk H.-P."/>
        </authorList>
    </citation>
    <scope>NUCLEOTIDE SEQUENCE [LARGE SCALE GENOMIC DNA]</scope>
    <source>
        <strain>DSM 12343 / LSv54</strain>
    </source>
</reference>
<protein>
    <recommendedName>
        <fullName evidence="1">Translational regulator CsrA</fullName>
    </recommendedName>
</protein>
<accession>Q6AJR0</accession>
<comment type="function">
    <text evidence="1">A translational regulator that binds mRNA to regulate translation initiation and/or mRNA stability. Usually binds in the 5'-UTR at or near the Shine-Dalgarno sequence preventing ribosome-binding, thus repressing translation. Its main target seems to be the major flagellin gene, while its function is anatagonized by FliW.</text>
</comment>
<comment type="subunit">
    <text evidence="1">Homodimer; the beta-strands of each monomer intercalate to form a hydrophobic core, while the alpha-helices form wings that extend away from the core.</text>
</comment>
<comment type="subcellular location">
    <subcellularLocation>
        <location evidence="1">Cytoplasm</location>
    </subcellularLocation>
</comment>
<comment type="similarity">
    <text evidence="1">Belongs to the CsrA/RsmA family.</text>
</comment>
<organism>
    <name type="scientific">Desulfotalea psychrophila (strain LSv54 / DSM 12343)</name>
    <dbReference type="NCBI Taxonomy" id="177439"/>
    <lineage>
        <taxon>Bacteria</taxon>
        <taxon>Pseudomonadati</taxon>
        <taxon>Thermodesulfobacteriota</taxon>
        <taxon>Desulfobulbia</taxon>
        <taxon>Desulfobulbales</taxon>
        <taxon>Desulfocapsaceae</taxon>
        <taxon>Desulfotalea</taxon>
    </lineage>
</organism>